<dbReference type="EMBL" id="AE005674">
    <property type="protein sequence ID" value="AAN43497.1"/>
    <property type="status" value="ALT_INIT"/>
    <property type="molecule type" value="Genomic_DNA"/>
</dbReference>
<dbReference type="EMBL" id="AE014073">
    <property type="protein sequence ID" value="AAP17327.1"/>
    <property type="status" value="ALT_INIT"/>
    <property type="molecule type" value="Genomic_DNA"/>
</dbReference>
<dbReference type="RefSeq" id="NP_707790.1">
    <property type="nucleotide sequence ID" value="NC_004337.2"/>
</dbReference>
<dbReference type="RefSeq" id="WP_000100205.1">
    <property type="nucleotide sequence ID" value="NZ_WPGW01000033.1"/>
</dbReference>
<dbReference type="STRING" id="198214.SF1945"/>
<dbReference type="PaxDb" id="198214-SF1945"/>
<dbReference type="GeneID" id="1025166"/>
<dbReference type="KEGG" id="sfl:SF1945"/>
<dbReference type="KEGG" id="sfx:S2038"/>
<dbReference type="PATRIC" id="fig|198214.7.peg.2321"/>
<dbReference type="HOGENOM" id="CLU_028880_4_1_6"/>
<dbReference type="Proteomes" id="UP000001006">
    <property type="component" value="Chromosome"/>
</dbReference>
<dbReference type="Proteomes" id="UP000002673">
    <property type="component" value="Chromosome"/>
</dbReference>
<dbReference type="GO" id="GO:0005886">
    <property type="term" value="C:plasma membrane"/>
    <property type="evidence" value="ECO:0007669"/>
    <property type="project" value="UniProtKB-SubCell"/>
</dbReference>
<dbReference type="GO" id="GO:0022857">
    <property type="term" value="F:transmembrane transporter activity"/>
    <property type="evidence" value="ECO:0007669"/>
    <property type="project" value="InterPro"/>
</dbReference>
<dbReference type="CDD" id="cd06579">
    <property type="entry name" value="TM_PBP1_transp_AraH_like"/>
    <property type="match status" value="1"/>
</dbReference>
<dbReference type="InterPro" id="IPR001851">
    <property type="entry name" value="ABC_transp_permease"/>
</dbReference>
<dbReference type="NCBIfam" id="NF008441">
    <property type="entry name" value="PRK11285.1"/>
    <property type="match status" value="1"/>
</dbReference>
<dbReference type="PANTHER" id="PTHR32196">
    <property type="entry name" value="ABC TRANSPORTER PERMEASE PROTEIN YPHD-RELATED-RELATED"/>
    <property type="match status" value="1"/>
</dbReference>
<dbReference type="PANTHER" id="PTHR32196:SF37">
    <property type="entry name" value="L-ARABINOSE TRANSPORT SYSTEM PERMEASE PROTEIN ARAH"/>
    <property type="match status" value="1"/>
</dbReference>
<dbReference type="Pfam" id="PF02653">
    <property type="entry name" value="BPD_transp_2"/>
    <property type="match status" value="1"/>
</dbReference>
<accession>P0AE27</accession>
<accession>P08532</accession>
<accession>P76304</accession>
<accession>P76305</accession>
<organism>
    <name type="scientific">Shigella flexneri</name>
    <dbReference type="NCBI Taxonomy" id="623"/>
    <lineage>
        <taxon>Bacteria</taxon>
        <taxon>Pseudomonadati</taxon>
        <taxon>Pseudomonadota</taxon>
        <taxon>Gammaproteobacteria</taxon>
        <taxon>Enterobacterales</taxon>
        <taxon>Enterobacteriaceae</taxon>
        <taxon>Shigella</taxon>
    </lineage>
</organism>
<reference key="1">
    <citation type="journal article" date="2002" name="Nucleic Acids Res.">
        <title>Genome sequence of Shigella flexneri 2a: insights into pathogenicity through comparison with genomes of Escherichia coli K12 and O157.</title>
        <authorList>
            <person name="Jin Q."/>
            <person name="Yuan Z."/>
            <person name="Xu J."/>
            <person name="Wang Y."/>
            <person name="Shen Y."/>
            <person name="Lu W."/>
            <person name="Wang J."/>
            <person name="Liu H."/>
            <person name="Yang J."/>
            <person name="Yang F."/>
            <person name="Zhang X."/>
            <person name="Zhang J."/>
            <person name="Yang G."/>
            <person name="Wu H."/>
            <person name="Qu D."/>
            <person name="Dong J."/>
            <person name="Sun L."/>
            <person name="Xue Y."/>
            <person name="Zhao A."/>
            <person name="Gao Y."/>
            <person name="Zhu J."/>
            <person name="Kan B."/>
            <person name="Ding K."/>
            <person name="Chen S."/>
            <person name="Cheng H."/>
            <person name="Yao Z."/>
            <person name="He B."/>
            <person name="Chen R."/>
            <person name="Ma D."/>
            <person name="Qiang B."/>
            <person name="Wen Y."/>
            <person name="Hou Y."/>
            <person name="Yu J."/>
        </authorList>
    </citation>
    <scope>NUCLEOTIDE SEQUENCE [LARGE SCALE GENOMIC DNA]</scope>
    <source>
        <strain>301 / Serotype 2a</strain>
    </source>
</reference>
<reference key="2">
    <citation type="journal article" date="2003" name="Infect. Immun.">
        <title>Complete genome sequence and comparative genomics of Shigella flexneri serotype 2a strain 2457T.</title>
        <authorList>
            <person name="Wei J."/>
            <person name="Goldberg M.B."/>
            <person name="Burland V."/>
            <person name="Venkatesan M.M."/>
            <person name="Deng W."/>
            <person name="Fournier G."/>
            <person name="Mayhew G.F."/>
            <person name="Plunkett G. III"/>
            <person name="Rose D.J."/>
            <person name="Darling A."/>
            <person name="Mau B."/>
            <person name="Perna N.T."/>
            <person name="Payne S.M."/>
            <person name="Runyen-Janecky L.J."/>
            <person name="Zhou S."/>
            <person name="Schwartz D.C."/>
            <person name="Blattner F.R."/>
        </authorList>
    </citation>
    <scope>NUCLEOTIDE SEQUENCE [LARGE SCALE GENOMIC DNA]</scope>
    <source>
        <strain>ATCC 700930 / 2457T / Serotype 2a</strain>
    </source>
</reference>
<name>ARAH_SHIFL</name>
<sequence length="328" mass="34211">MSSVSTSGSGAPKSSFSFGRIWDQYGMLVVFAVLFIACAIFVPNFATFINMKGLGLAISMSGMVACGMLFCLASGDFDLSVASVIACAGVTTAVVINLTESLWIGVAAGLLLGVLCGLVNGFVIAKLKINALITTLATMQIVRGLAYIISDGKAVGIEDESFFALGYANWFGLPAPIWLTVACLIIFGLLLNKTTFGRNTLAIGGNEEAARLAGVPVVRTKIIIFVLSGLVSAIAGIILASRMTSGQPMTSIGYELIVISACVLGGVSLKGGIGKISYVVAGILILGTVENAMNLLNISPFAQYVVRGLILLAAVIFDRYKQKAKRTV</sequence>
<proteinExistence type="inferred from homology"/>
<gene>
    <name type="primary">araH</name>
    <name type="ordered locus">SF1945</name>
    <name type="ordered locus">S2038</name>
</gene>
<keyword id="KW-0997">Cell inner membrane</keyword>
<keyword id="KW-1003">Cell membrane</keyword>
<keyword id="KW-0472">Membrane</keyword>
<keyword id="KW-1185">Reference proteome</keyword>
<keyword id="KW-0762">Sugar transport</keyword>
<keyword id="KW-0812">Transmembrane</keyword>
<keyword id="KW-1133">Transmembrane helix</keyword>
<keyword id="KW-0813">Transport</keyword>
<comment type="function">
    <text evidence="1">Part of the binding-protein-dependent transport system for L-arabinose. Probably responsible for the translocation of the substrate across the membrane (By similarity).</text>
</comment>
<comment type="subcellular location">
    <subcellularLocation>
        <location evidence="1">Cell inner membrane</location>
        <topology evidence="1">Multi-pass membrane protein</topology>
    </subcellularLocation>
</comment>
<comment type="similarity">
    <text evidence="3">Belongs to the binding-protein-dependent transport system permease family. AraH/RbsC subfamily.</text>
</comment>
<comment type="sequence caution" evidence="3">
    <conflict type="erroneous initiation">
        <sequence resource="EMBL-CDS" id="AAN43497"/>
    </conflict>
</comment>
<comment type="sequence caution" evidence="3">
    <conflict type="erroneous initiation">
        <sequence resource="EMBL-CDS" id="AAP17327"/>
    </conflict>
</comment>
<evidence type="ECO:0000250" key="1"/>
<evidence type="ECO:0000255" key="2"/>
<evidence type="ECO:0000305" key="3"/>
<protein>
    <recommendedName>
        <fullName>L-arabinose transport system permease protein AraH</fullName>
    </recommendedName>
</protein>
<feature type="chain" id="PRO_0000059952" description="L-arabinose transport system permease protein AraH">
    <location>
        <begin position="1"/>
        <end position="328"/>
    </location>
</feature>
<feature type="transmembrane region" description="Helical" evidence="2">
    <location>
        <begin position="29"/>
        <end position="49"/>
    </location>
</feature>
<feature type="transmembrane region" description="Helical" evidence="2">
    <location>
        <begin position="53"/>
        <end position="73"/>
    </location>
</feature>
<feature type="transmembrane region" description="Helical" evidence="2">
    <location>
        <begin position="79"/>
        <end position="99"/>
    </location>
</feature>
<feature type="transmembrane region" description="Helical" evidence="2">
    <location>
        <begin position="104"/>
        <end position="124"/>
    </location>
</feature>
<feature type="transmembrane region" description="Helical" evidence="2">
    <location>
        <begin position="129"/>
        <end position="149"/>
    </location>
</feature>
<feature type="transmembrane region" description="Helical" evidence="2">
    <location>
        <begin position="171"/>
        <end position="191"/>
    </location>
</feature>
<feature type="transmembrane region" description="Helical" evidence="2">
    <location>
        <begin position="220"/>
        <end position="240"/>
    </location>
</feature>
<feature type="transmembrane region" description="Helical" evidence="2">
    <location>
        <begin position="249"/>
        <end position="269"/>
    </location>
</feature>
<feature type="transmembrane region" description="Helical" evidence="2">
    <location>
        <begin position="276"/>
        <end position="296"/>
    </location>
</feature>
<feature type="transmembrane region" description="Helical" evidence="2">
    <location>
        <begin position="297"/>
        <end position="317"/>
    </location>
</feature>